<sequence length="85" mass="9148">MEAARGWDEEVMKWLAVAICLAMVGMAVMPAFQPLNLAFELYYGHHESLPITAASAAYEGIVITATLAAAAATAELVHLLLQQFL</sequence>
<proteinExistence type="predicted"/>
<keyword id="KW-1003">Cell membrane</keyword>
<keyword id="KW-0472">Membrane</keyword>
<keyword id="KW-1185">Reference proteome</keyword>
<keyword id="KW-0812">Transmembrane</keyword>
<keyword id="KW-1133">Transmembrane helix</keyword>
<gene>
    <name type="ordered locus">AF_0148</name>
</gene>
<protein>
    <recommendedName>
        <fullName>Uncharacterized protein AF_0148</fullName>
    </recommendedName>
</protein>
<accession>O30089</accession>
<reference key="1">
    <citation type="journal article" date="1997" name="Nature">
        <title>The complete genome sequence of the hyperthermophilic, sulphate-reducing archaeon Archaeoglobus fulgidus.</title>
        <authorList>
            <person name="Klenk H.-P."/>
            <person name="Clayton R.A."/>
            <person name="Tomb J.-F."/>
            <person name="White O."/>
            <person name="Nelson K.E."/>
            <person name="Ketchum K.A."/>
            <person name="Dodson R.J."/>
            <person name="Gwinn M.L."/>
            <person name="Hickey E.K."/>
            <person name="Peterson J.D."/>
            <person name="Richardson D.L."/>
            <person name="Kerlavage A.R."/>
            <person name="Graham D.E."/>
            <person name="Kyrpides N.C."/>
            <person name="Fleischmann R.D."/>
            <person name="Quackenbush J."/>
            <person name="Lee N.H."/>
            <person name="Sutton G.G."/>
            <person name="Gill S.R."/>
            <person name="Kirkness E.F."/>
            <person name="Dougherty B.A."/>
            <person name="McKenney K."/>
            <person name="Adams M.D."/>
            <person name="Loftus B.J."/>
            <person name="Peterson S.N."/>
            <person name="Reich C.I."/>
            <person name="McNeil L.K."/>
            <person name="Badger J.H."/>
            <person name="Glodek A."/>
            <person name="Zhou L."/>
            <person name="Overbeek R."/>
            <person name="Gocayne J.D."/>
            <person name="Weidman J.F."/>
            <person name="McDonald L.A."/>
            <person name="Utterback T.R."/>
            <person name="Cotton M.D."/>
            <person name="Spriggs T."/>
            <person name="Artiach P."/>
            <person name="Kaine B.P."/>
            <person name="Sykes S.M."/>
            <person name="Sadow P.W."/>
            <person name="D'Andrea K.P."/>
            <person name="Bowman C."/>
            <person name="Fujii C."/>
            <person name="Garland S.A."/>
            <person name="Mason T.M."/>
            <person name="Olsen G.J."/>
            <person name="Fraser C.M."/>
            <person name="Smith H.O."/>
            <person name="Woese C.R."/>
            <person name="Venter J.C."/>
        </authorList>
    </citation>
    <scope>NUCLEOTIDE SEQUENCE [LARGE SCALE GENOMIC DNA]</scope>
    <source>
        <strain>ATCC 49558 / DSM 4304 / JCM 9628 / NBRC 100126 / VC-16</strain>
    </source>
</reference>
<comment type="subcellular location">
    <subcellularLocation>
        <location evidence="2">Cell membrane</location>
        <topology evidence="2">Multi-pass membrane protein</topology>
    </subcellularLocation>
</comment>
<dbReference type="EMBL" id="AE000782">
    <property type="protein sequence ID" value="AAB91089.1"/>
    <property type="molecule type" value="Genomic_DNA"/>
</dbReference>
<dbReference type="PIR" id="D69268">
    <property type="entry name" value="D69268"/>
</dbReference>
<dbReference type="RefSeq" id="WP_010877660.1">
    <property type="nucleotide sequence ID" value="NC_000917.1"/>
</dbReference>
<dbReference type="STRING" id="224325.AF_0148"/>
<dbReference type="PaxDb" id="224325-AF_0148"/>
<dbReference type="EnsemblBacteria" id="AAB91089">
    <property type="protein sequence ID" value="AAB91089"/>
    <property type="gene ID" value="AF_0148"/>
</dbReference>
<dbReference type="GeneID" id="1483359"/>
<dbReference type="KEGG" id="afu:AF_0148"/>
<dbReference type="eggNOG" id="arCOG09323">
    <property type="taxonomic scope" value="Archaea"/>
</dbReference>
<dbReference type="HOGENOM" id="CLU_2504775_0_0_2"/>
<dbReference type="Proteomes" id="UP000002199">
    <property type="component" value="Chromosome"/>
</dbReference>
<dbReference type="GO" id="GO:0005886">
    <property type="term" value="C:plasma membrane"/>
    <property type="evidence" value="ECO:0007669"/>
    <property type="project" value="UniProtKB-SubCell"/>
</dbReference>
<feature type="chain" id="PRO_0000127838" description="Uncharacterized protein AF_0148">
    <location>
        <begin position="1"/>
        <end position="85"/>
    </location>
</feature>
<feature type="transmembrane region" description="Helical" evidence="1">
    <location>
        <begin position="13"/>
        <end position="35"/>
    </location>
</feature>
<feature type="transmembrane region" description="Helical" evidence="1">
    <location>
        <begin position="59"/>
        <end position="81"/>
    </location>
</feature>
<name>Y148_ARCFU</name>
<evidence type="ECO:0000255" key="1"/>
<evidence type="ECO:0000305" key="2"/>
<organism>
    <name type="scientific">Archaeoglobus fulgidus (strain ATCC 49558 / DSM 4304 / JCM 9628 / NBRC 100126 / VC-16)</name>
    <dbReference type="NCBI Taxonomy" id="224325"/>
    <lineage>
        <taxon>Archaea</taxon>
        <taxon>Methanobacteriati</taxon>
        <taxon>Methanobacteriota</taxon>
        <taxon>Archaeoglobi</taxon>
        <taxon>Archaeoglobales</taxon>
        <taxon>Archaeoglobaceae</taxon>
        <taxon>Archaeoglobus</taxon>
    </lineage>
</organism>